<accession>B1P1C0</accession>
<organism>
    <name type="scientific">Chilobrachys guangxiensis</name>
    <name type="common">Chinese earth tiger tarantula</name>
    <name type="synonym">Chilobrachys jingzhao</name>
    <dbReference type="NCBI Taxonomy" id="278060"/>
    <lineage>
        <taxon>Eukaryota</taxon>
        <taxon>Metazoa</taxon>
        <taxon>Ecdysozoa</taxon>
        <taxon>Arthropoda</taxon>
        <taxon>Chelicerata</taxon>
        <taxon>Arachnida</taxon>
        <taxon>Araneae</taxon>
        <taxon>Mygalomorphae</taxon>
        <taxon>Theraphosidae</taxon>
        <taxon>Chilobrachys</taxon>
    </lineage>
</organism>
<sequence>MKTLVLFIIFGLAALFLLSSATELEETERGCQKFFWTCHPGQPPCCSGLACTWPTEICILGR</sequence>
<comment type="function">
    <text>Probable ion channel inhibitor.</text>
</comment>
<comment type="subcellular location">
    <subcellularLocation>
        <location evidence="1">Secreted</location>
    </subcellularLocation>
</comment>
<comment type="tissue specificity">
    <text>Expressed by the venom gland.</text>
</comment>
<comment type="domain">
    <text evidence="1">The presence of a 'disulfide through disulfide knot' structurally defines this protein as a knottin.</text>
</comment>
<comment type="similarity">
    <text evidence="3">Belongs to the neurotoxin 10 (Hwtx-1) family. 30 (Jztx-14) subfamily.</text>
</comment>
<protein>
    <recommendedName>
        <fullName>U8-theraphotoxin-Cg1a 2</fullName>
        <shortName>U8-TRTX-Cg1a</shortName>
    </recommendedName>
    <alternativeName>
        <fullName>Jingzhaotoxin-14</fullName>
        <shortName>JZTX-14</shortName>
    </alternativeName>
</protein>
<dbReference type="EMBL" id="EU233851">
    <property type="protein sequence ID" value="ABY71670.1"/>
    <property type="molecule type" value="mRNA"/>
</dbReference>
<dbReference type="SMR" id="B1P1C0"/>
<dbReference type="ArachnoServer" id="AS000800">
    <property type="toxin name" value="U8-theraphotoxin-Cg1a"/>
</dbReference>
<dbReference type="GO" id="GO:0005576">
    <property type="term" value="C:extracellular region"/>
    <property type="evidence" value="ECO:0007669"/>
    <property type="project" value="UniProtKB-SubCell"/>
</dbReference>
<dbReference type="GO" id="GO:0008200">
    <property type="term" value="F:ion channel inhibitor activity"/>
    <property type="evidence" value="ECO:0007669"/>
    <property type="project" value="InterPro"/>
</dbReference>
<dbReference type="GO" id="GO:0090729">
    <property type="term" value="F:toxin activity"/>
    <property type="evidence" value="ECO:0007669"/>
    <property type="project" value="UniProtKB-KW"/>
</dbReference>
<dbReference type="InterPro" id="IPR011696">
    <property type="entry name" value="Huwentoxin-1"/>
</dbReference>
<dbReference type="Pfam" id="PF07740">
    <property type="entry name" value="Toxin_12"/>
    <property type="match status" value="1"/>
</dbReference>
<keyword id="KW-1015">Disulfide bond</keyword>
<keyword id="KW-0872">Ion channel impairing toxin</keyword>
<keyword id="KW-0960">Knottin</keyword>
<keyword id="KW-0964">Secreted</keyword>
<keyword id="KW-0732">Signal</keyword>
<keyword id="KW-0800">Toxin</keyword>
<reference key="1">
    <citation type="journal article" date="2008" name="Cell. Mol. Life Sci.">
        <title>Molecular diversity and evolution of cystine knot toxins of the tarantula Chilobrachys jingzhao.</title>
        <authorList>
            <person name="Chen J."/>
            <person name="Deng M."/>
            <person name="He Q."/>
            <person name="Meng E."/>
            <person name="Jiang L."/>
            <person name="Liao Z."/>
            <person name="Rong M."/>
            <person name="Liang S."/>
        </authorList>
    </citation>
    <scope>NUCLEOTIDE SEQUENCE [LARGE SCALE MRNA]</scope>
    <source>
        <tissue>Venom gland</tissue>
    </source>
</reference>
<name>JZ14A_CHIGU</name>
<evidence type="ECO:0000250" key="1"/>
<evidence type="ECO:0000255" key="2"/>
<evidence type="ECO:0000305" key="3"/>
<proteinExistence type="evidence at transcript level"/>
<feature type="signal peptide" evidence="2">
    <location>
        <begin position="1"/>
        <end position="21"/>
    </location>
</feature>
<feature type="propeptide" id="PRO_0000398425" evidence="1">
    <location>
        <begin position="22"/>
        <end position="29"/>
    </location>
</feature>
<feature type="peptide" id="PRO_0000398426" description="U8-theraphotoxin-Cg1a 2">
    <location>
        <begin position="30"/>
        <end position="62"/>
    </location>
</feature>
<feature type="disulfide bond" evidence="1">
    <location>
        <begin position="31"/>
        <end position="46"/>
    </location>
</feature>
<feature type="disulfide bond" evidence="1">
    <location>
        <begin position="38"/>
        <end position="51"/>
    </location>
</feature>
<feature type="disulfide bond" evidence="1">
    <location>
        <begin position="45"/>
        <end position="58"/>
    </location>
</feature>